<protein>
    <recommendedName>
        <fullName>Probable serine/threonine-protein kinase HAL5-like</fullName>
        <ecNumber>2.7.11.1</ecNumber>
    </recommendedName>
</protein>
<reference key="1">
    <citation type="journal article" date="2007" name="Proc. Natl. Acad. Sci. U.S.A.">
        <title>Independent sorting-out of thousands of duplicated gene pairs in two yeast species descended from a whole-genome duplication.</title>
        <authorList>
            <person name="Scannell D.R."/>
            <person name="Frank A.C."/>
            <person name="Conant G.C."/>
            <person name="Byrne K.P."/>
            <person name="Woolfit M."/>
            <person name="Wolfe K.H."/>
        </authorList>
    </citation>
    <scope>NUCLEOTIDE SEQUENCE [LARGE SCALE GENOMIC DNA]</scope>
    <source>
        <strain>ATCC 22028 / DSM 70294 / BCRC 21397 / CBS 2163 / NBRC 10782 / NRRL Y-8283 / UCD 57-17</strain>
    </source>
</reference>
<proteinExistence type="inferred from homology"/>
<organism>
    <name type="scientific">Vanderwaltozyma polyspora (strain ATCC 22028 / DSM 70294 / BCRC 21397 / CBS 2163 / NBRC 10782 / NRRL Y-8283 / UCD 57-17)</name>
    <name type="common">Kluyveromyces polysporus</name>
    <dbReference type="NCBI Taxonomy" id="436907"/>
    <lineage>
        <taxon>Eukaryota</taxon>
        <taxon>Fungi</taxon>
        <taxon>Dikarya</taxon>
        <taxon>Ascomycota</taxon>
        <taxon>Saccharomycotina</taxon>
        <taxon>Saccharomycetes</taxon>
        <taxon>Saccharomycetales</taxon>
        <taxon>Saccharomycetaceae</taxon>
        <taxon>Vanderwaltozyma</taxon>
    </lineage>
</organism>
<name>HAL5_VANPO</name>
<feature type="chain" id="PRO_0000333583" description="Probable serine/threonine-protein kinase HAL5-like">
    <location>
        <begin position="1"/>
        <end position="758"/>
    </location>
</feature>
<feature type="domain" description="Protein kinase" evidence="1">
    <location>
        <begin position="442"/>
        <end position="744"/>
    </location>
</feature>
<feature type="region of interest" description="Disordered" evidence="3">
    <location>
        <begin position="1"/>
        <end position="170"/>
    </location>
</feature>
<feature type="region of interest" description="Disordered" evidence="3">
    <location>
        <begin position="189"/>
        <end position="252"/>
    </location>
</feature>
<feature type="compositionally biased region" description="Polar residues" evidence="3">
    <location>
        <begin position="22"/>
        <end position="57"/>
    </location>
</feature>
<feature type="compositionally biased region" description="Basic and acidic residues" evidence="3">
    <location>
        <begin position="58"/>
        <end position="69"/>
    </location>
</feature>
<feature type="compositionally biased region" description="Low complexity" evidence="3">
    <location>
        <begin position="129"/>
        <end position="153"/>
    </location>
</feature>
<feature type="compositionally biased region" description="Basic and acidic residues" evidence="3">
    <location>
        <begin position="216"/>
        <end position="226"/>
    </location>
</feature>
<feature type="compositionally biased region" description="Polar residues" evidence="3">
    <location>
        <begin position="227"/>
        <end position="247"/>
    </location>
</feature>
<feature type="active site" description="Proton acceptor" evidence="1 2">
    <location>
        <position position="595"/>
    </location>
</feature>
<feature type="binding site" evidence="1">
    <location>
        <begin position="448"/>
        <end position="456"/>
    </location>
    <ligand>
        <name>ATP</name>
        <dbReference type="ChEBI" id="CHEBI:30616"/>
    </ligand>
</feature>
<feature type="binding site" evidence="1">
    <location>
        <position position="485"/>
    </location>
    <ligand>
        <name>ATP</name>
        <dbReference type="ChEBI" id="CHEBI:30616"/>
    </ligand>
</feature>
<dbReference type="EC" id="2.7.11.1"/>
<dbReference type="EMBL" id="DS480388">
    <property type="protein sequence ID" value="EDO18525.1"/>
    <property type="molecule type" value="Genomic_DNA"/>
</dbReference>
<dbReference type="RefSeq" id="XP_001646383.1">
    <property type="nucleotide sequence ID" value="XM_001646333.1"/>
</dbReference>
<dbReference type="SMR" id="A7TGR2"/>
<dbReference type="FunCoup" id="A7TGR2">
    <property type="interactions" value="217"/>
</dbReference>
<dbReference type="STRING" id="436907.A7TGR2"/>
<dbReference type="GeneID" id="5546822"/>
<dbReference type="KEGG" id="vpo:Kpol_2001p30"/>
<dbReference type="eggNOG" id="KOG0590">
    <property type="taxonomic scope" value="Eukaryota"/>
</dbReference>
<dbReference type="HOGENOM" id="CLU_016904_0_0_1"/>
<dbReference type="InParanoid" id="A7TGR2"/>
<dbReference type="OMA" id="EFYVFEE"/>
<dbReference type="OrthoDB" id="6513151at2759"/>
<dbReference type="PhylomeDB" id="A7TGR2"/>
<dbReference type="Proteomes" id="UP000000267">
    <property type="component" value="Unassembled WGS sequence"/>
</dbReference>
<dbReference type="GO" id="GO:0005829">
    <property type="term" value="C:cytosol"/>
    <property type="evidence" value="ECO:0007669"/>
    <property type="project" value="TreeGrafter"/>
</dbReference>
<dbReference type="GO" id="GO:0005524">
    <property type="term" value="F:ATP binding"/>
    <property type="evidence" value="ECO:0007669"/>
    <property type="project" value="UniProtKB-KW"/>
</dbReference>
<dbReference type="GO" id="GO:0106310">
    <property type="term" value="F:protein serine kinase activity"/>
    <property type="evidence" value="ECO:0007669"/>
    <property type="project" value="RHEA"/>
</dbReference>
<dbReference type="GO" id="GO:0004674">
    <property type="term" value="F:protein serine/threonine kinase activity"/>
    <property type="evidence" value="ECO:0007669"/>
    <property type="project" value="UniProtKB-KW"/>
</dbReference>
<dbReference type="GO" id="GO:0030003">
    <property type="term" value="P:intracellular monoatomic cation homeostasis"/>
    <property type="evidence" value="ECO:0007669"/>
    <property type="project" value="TreeGrafter"/>
</dbReference>
<dbReference type="Gene3D" id="1.10.510.10">
    <property type="entry name" value="Transferase(Phosphotransferase) domain 1"/>
    <property type="match status" value="1"/>
</dbReference>
<dbReference type="InterPro" id="IPR011009">
    <property type="entry name" value="Kinase-like_dom_sf"/>
</dbReference>
<dbReference type="InterPro" id="IPR000719">
    <property type="entry name" value="Prot_kinase_dom"/>
</dbReference>
<dbReference type="InterPro" id="IPR008271">
    <property type="entry name" value="Ser/Thr_kinase_AS"/>
</dbReference>
<dbReference type="PANTHER" id="PTHR24343">
    <property type="entry name" value="SERINE/THREONINE KINASE"/>
    <property type="match status" value="1"/>
</dbReference>
<dbReference type="PANTHER" id="PTHR24343:SF43">
    <property type="entry name" value="SERINE_THREONINE-PROTEIN KINASE HAL5-RELATED"/>
    <property type="match status" value="1"/>
</dbReference>
<dbReference type="Pfam" id="PF00069">
    <property type="entry name" value="Pkinase"/>
    <property type="match status" value="1"/>
</dbReference>
<dbReference type="SMART" id="SM00220">
    <property type="entry name" value="S_TKc"/>
    <property type="match status" value="1"/>
</dbReference>
<dbReference type="SUPFAM" id="SSF56112">
    <property type="entry name" value="Protein kinase-like (PK-like)"/>
    <property type="match status" value="1"/>
</dbReference>
<dbReference type="PROSITE" id="PS50011">
    <property type="entry name" value="PROTEIN_KINASE_DOM"/>
    <property type="match status" value="1"/>
</dbReference>
<dbReference type="PROSITE" id="PS00108">
    <property type="entry name" value="PROTEIN_KINASE_ST"/>
    <property type="match status" value="1"/>
</dbReference>
<gene>
    <name type="ORF">Kpol_2001p30</name>
</gene>
<accession>A7TGR2</accession>
<keyword id="KW-0067">ATP-binding</keyword>
<keyword id="KW-0418">Kinase</keyword>
<keyword id="KW-0547">Nucleotide-binding</keyword>
<keyword id="KW-1185">Reference proteome</keyword>
<keyword id="KW-0723">Serine/threonine-protein kinase</keyword>
<keyword id="KW-0808">Transferase</keyword>
<sequence>MGTVEQKSTHTSPPTSPISRARSISGSIKSLFKPSSVQNSTPTVSPHESSPPLGNSDNLKKLVDTKRAELSSSRGAPPVNVNNVSNLSINTDVRPADDQPQVKSAKSPIIQTPKMAMNIVPQNIKSVLSSPRQSSSTNDRSSITSATSSVTSANDQKEKNYGSGNGSADDIPIAQLRLSEQDRAQDYTIDNALDTKDKSKPVKRNNSTSAFRGRKDKNFESSEYEIRSNSLSRIHSTPQNESPTVNNIHRGRPYSESISISSLKHIEQESKCILQVDNFKVFENGMHVHNLKIMPIVKSAQADAANDHDSNELNKQKSMFSLTSIFKSHKEDSGVDNSPLENLDNAVSLLPSIKNMAVYNRKRNISSSTAGTGGSDSDSIPDDLSERMVNPCAAIGAEELKLINTLSERINDAILCKSGKKSSHMLKEKDPDAMTFTQLYGKSMGVVLGHGAYGVVRLFSRNATERDPQYLQTYCNGQKMFFAVKELKPKSSEPKEKFSTRITSEFIIGHSLNHSEKKGGSKYSPNIIRVLDLLEISSGSFIEVLEFCPSGDLYNILTRKTKNGTALHPLEADCFMKQLLTGVQYMHSHGVAHCDLKPENILFHPNGLLKICDFGTSCVFQTAWEKNVHFQTGAVGSEPYVAPEEFIHDFNYDPRLVDCWSCGVVYCSMVLGHYLWKLAVKEKDPLYKAFYEEISSNKEFYVFEEMRHVNHEINRLRKISLYKIFQPNPDKRITIDQLLQSPWMKNTRCCIDYKTISS</sequence>
<evidence type="ECO:0000255" key="1">
    <source>
        <dbReference type="PROSITE-ProRule" id="PRU00159"/>
    </source>
</evidence>
<evidence type="ECO:0000255" key="2">
    <source>
        <dbReference type="PROSITE-ProRule" id="PRU10027"/>
    </source>
</evidence>
<evidence type="ECO:0000256" key="3">
    <source>
        <dbReference type="SAM" id="MobiDB-lite"/>
    </source>
</evidence>
<evidence type="ECO:0000305" key="4"/>
<comment type="catalytic activity">
    <reaction>
        <text>L-seryl-[protein] + ATP = O-phospho-L-seryl-[protein] + ADP + H(+)</text>
        <dbReference type="Rhea" id="RHEA:17989"/>
        <dbReference type="Rhea" id="RHEA-COMP:9863"/>
        <dbReference type="Rhea" id="RHEA-COMP:11604"/>
        <dbReference type="ChEBI" id="CHEBI:15378"/>
        <dbReference type="ChEBI" id="CHEBI:29999"/>
        <dbReference type="ChEBI" id="CHEBI:30616"/>
        <dbReference type="ChEBI" id="CHEBI:83421"/>
        <dbReference type="ChEBI" id="CHEBI:456216"/>
        <dbReference type="EC" id="2.7.11.1"/>
    </reaction>
</comment>
<comment type="catalytic activity">
    <reaction>
        <text>L-threonyl-[protein] + ATP = O-phospho-L-threonyl-[protein] + ADP + H(+)</text>
        <dbReference type="Rhea" id="RHEA:46608"/>
        <dbReference type="Rhea" id="RHEA-COMP:11060"/>
        <dbReference type="Rhea" id="RHEA-COMP:11605"/>
        <dbReference type="ChEBI" id="CHEBI:15378"/>
        <dbReference type="ChEBI" id="CHEBI:30013"/>
        <dbReference type="ChEBI" id="CHEBI:30616"/>
        <dbReference type="ChEBI" id="CHEBI:61977"/>
        <dbReference type="ChEBI" id="CHEBI:456216"/>
        <dbReference type="EC" id="2.7.11.1"/>
    </reaction>
</comment>
<comment type="similarity">
    <text evidence="4">Belongs to the protein kinase superfamily. CAMK Ser/Thr protein kinase family. NPR/HAL subfamily. HAL5 sub-subfamily.</text>
</comment>